<accession>Q63US2</accession>
<keyword id="KW-0963">Cytoplasm</keyword>
<keyword id="KW-0342">GTP-binding</keyword>
<keyword id="KW-0436">Ligase</keyword>
<keyword id="KW-0460">Magnesium</keyword>
<keyword id="KW-0479">Metal-binding</keyword>
<keyword id="KW-0547">Nucleotide-binding</keyword>
<keyword id="KW-0658">Purine biosynthesis</keyword>
<keyword id="KW-1185">Reference proteome</keyword>
<organism>
    <name type="scientific">Burkholderia pseudomallei (strain K96243)</name>
    <dbReference type="NCBI Taxonomy" id="272560"/>
    <lineage>
        <taxon>Bacteria</taxon>
        <taxon>Pseudomonadati</taxon>
        <taxon>Pseudomonadota</taxon>
        <taxon>Betaproteobacteria</taxon>
        <taxon>Burkholderiales</taxon>
        <taxon>Burkholderiaceae</taxon>
        <taxon>Burkholderia</taxon>
        <taxon>pseudomallei group</taxon>
    </lineage>
</organism>
<comment type="function">
    <text evidence="1">Plays an important role in the de novo pathway of purine nucleotide biosynthesis. Catalyzes the first committed step in the biosynthesis of AMP from IMP.</text>
</comment>
<comment type="catalytic activity">
    <reaction evidence="1">
        <text>IMP + L-aspartate + GTP = N(6)-(1,2-dicarboxyethyl)-AMP + GDP + phosphate + 2 H(+)</text>
        <dbReference type="Rhea" id="RHEA:15753"/>
        <dbReference type="ChEBI" id="CHEBI:15378"/>
        <dbReference type="ChEBI" id="CHEBI:29991"/>
        <dbReference type="ChEBI" id="CHEBI:37565"/>
        <dbReference type="ChEBI" id="CHEBI:43474"/>
        <dbReference type="ChEBI" id="CHEBI:57567"/>
        <dbReference type="ChEBI" id="CHEBI:58053"/>
        <dbReference type="ChEBI" id="CHEBI:58189"/>
        <dbReference type="EC" id="6.3.4.4"/>
    </reaction>
</comment>
<comment type="cofactor">
    <cofactor evidence="1">
        <name>Mg(2+)</name>
        <dbReference type="ChEBI" id="CHEBI:18420"/>
    </cofactor>
    <text evidence="1">Binds 1 Mg(2+) ion per subunit.</text>
</comment>
<comment type="pathway">
    <text evidence="1">Purine metabolism; AMP biosynthesis via de novo pathway; AMP from IMP: step 1/2.</text>
</comment>
<comment type="subunit">
    <text evidence="1">Homodimer.</text>
</comment>
<comment type="subcellular location">
    <subcellularLocation>
        <location evidence="1">Cytoplasm</location>
    </subcellularLocation>
</comment>
<comment type="similarity">
    <text evidence="1">Belongs to the adenylosuccinate synthetase family.</text>
</comment>
<feature type="chain" id="PRO_0000224262" description="Adenylosuccinate synthetase">
    <location>
        <begin position="1"/>
        <end position="448"/>
    </location>
</feature>
<feature type="active site" description="Proton acceptor" evidence="1">
    <location>
        <position position="23"/>
    </location>
</feature>
<feature type="active site" description="Proton donor" evidence="1">
    <location>
        <position position="51"/>
    </location>
</feature>
<feature type="binding site" evidence="1">
    <location>
        <begin position="22"/>
        <end position="28"/>
    </location>
    <ligand>
        <name>GTP</name>
        <dbReference type="ChEBI" id="CHEBI:37565"/>
    </ligand>
</feature>
<feature type="binding site" description="in other chain" evidence="1">
    <location>
        <begin position="23"/>
        <end position="26"/>
    </location>
    <ligand>
        <name>IMP</name>
        <dbReference type="ChEBI" id="CHEBI:58053"/>
        <note>ligand shared between dimeric partners</note>
    </ligand>
</feature>
<feature type="binding site" evidence="1">
    <location>
        <position position="23"/>
    </location>
    <ligand>
        <name>Mg(2+)</name>
        <dbReference type="ChEBI" id="CHEBI:18420"/>
    </ligand>
</feature>
<feature type="binding site" description="in other chain" evidence="1">
    <location>
        <begin position="48"/>
        <end position="51"/>
    </location>
    <ligand>
        <name>IMP</name>
        <dbReference type="ChEBI" id="CHEBI:58053"/>
        <note>ligand shared between dimeric partners</note>
    </ligand>
</feature>
<feature type="binding site" evidence="1">
    <location>
        <begin position="50"/>
        <end position="52"/>
    </location>
    <ligand>
        <name>GTP</name>
        <dbReference type="ChEBI" id="CHEBI:37565"/>
    </ligand>
</feature>
<feature type="binding site" evidence="1">
    <location>
        <position position="50"/>
    </location>
    <ligand>
        <name>Mg(2+)</name>
        <dbReference type="ChEBI" id="CHEBI:18420"/>
    </ligand>
</feature>
<feature type="binding site" description="in other chain" evidence="1">
    <location>
        <position position="139"/>
    </location>
    <ligand>
        <name>IMP</name>
        <dbReference type="ChEBI" id="CHEBI:58053"/>
        <note>ligand shared between dimeric partners</note>
    </ligand>
</feature>
<feature type="binding site" evidence="1">
    <location>
        <position position="153"/>
    </location>
    <ligand>
        <name>IMP</name>
        <dbReference type="ChEBI" id="CHEBI:58053"/>
        <note>ligand shared between dimeric partners</note>
    </ligand>
</feature>
<feature type="binding site" description="in other chain" evidence="1">
    <location>
        <position position="234"/>
    </location>
    <ligand>
        <name>IMP</name>
        <dbReference type="ChEBI" id="CHEBI:58053"/>
        <note>ligand shared between dimeric partners</note>
    </ligand>
</feature>
<feature type="binding site" description="in other chain" evidence="1">
    <location>
        <position position="249"/>
    </location>
    <ligand>
        <name>IMP</name>
        <dbReference type="ChEBI" id="CHEBI:58053"/>
        <note>ligand shared between dimeric partners</note>
    </ligand>
</feature>
<feature type="binding site" evidence="1">
    <location>
        <begin position="317"/>
        <end position="323"/>
    </location>
    <ligand>
        <name>substrate</name>
    </ligand>
</feature>
<feature type="binding site" description="in other chain" evidence="1">
    <location>
        <position position="321"/>
    </location>
    <ligand>
        <name>IMP</name>
        <dbReference type="ChEBI" id="CHEBI:58053"/>
        <note>ligand shared between dimeric partners</note>
    </ligand>
</feature>
<feature type="binding site" evidence="1">
    <location>
        <position position="323"/>
    </location>
    <ligand>
        <name>GTP</name>
        <dbReference type="ChEBI" id="CHEBI:37565"/>
    </ligand>
</feature>
<feature type="binding site" evidence="1">
    <location>
        <begin position="349"/>
        <end position="351"/>
    </location>
    <ligand>
        <name>GTP</name>
        <dbReference type="ChEBI" id="CHEBI:37565"/>
    </ligand>
</feature>
<feature type="binding site" evidence="1">
    <location>
        <begin position="431"/>
        <end position="433"/>
    </location>
    <ligand>
        <name>GTP</name>
        <dbReference type="ChEBI" id="CHEBI:37565"/>
    </ligand>
</feature>
<reference key="1">
    <citation type="journal article" date="2004" name="Proc. Natl. Acad. Sci. U.S.A.">
        <title>Genomic plasticity of the causative agent of melioidosis, Burkholderia pseudomallei.</title>
        <authorList>
            <person name="Holden M.T.G."/>
            <person name="Titball R.W."/>
            <person name="Peacock S.J."/>
            <person name="Cerdeno-Tarraga A.-M."/>
            <person name="Atkins T."/>
            <person name="Crossman L.C."/>
            <person name="Pitt T."/>
            <person name="Churcher C."/>
            <person name="Mungall K.L."/>
            <person name="Bentley S.D."/>
            <person name="Sebaihia M."/>
            <person name="Thomson N.R."/>
            <person name="Bason N."/>
            <person name="Beacham I.R."/>
            <person name="Brooks K."/>
            <person name="Brown K.A."/>
            <person name="Brown N.F."/>
            <person name="Challis G.L."/>
            <person name="Cherevach I."/>
            <person name="Chillingworth T."/>
            <person name="Cronin A."/>
            <person name="Crossett B."/>
            <person name="Davis P."/>
            <person name="DeShazer D."/>
            <person name="Feltwell T."/>
            <person name="Fraser A."/>
            <person name="Hance Z."/>
            <person name="Hauser H."/>
            <person name="Holroyd S."/>
            <person name="Jagels K."/>
            <person name="Keith K.E."/>
            <person name="Maddison M."/>
            <person name="Moule S."/>
            <person name="Price C."/>
            <person name="Quail M.A."/>
            <person name="Rabbinowitsch E."/>
            <person name="Rutherford K."/>
            <person name="Sanders M."/>
            <person name="Simmonds M."/>
            <person name="Songsivilai S."/>
            <person name="Stevens K."/>
            <person name="Tumapa S."/>
            <person name="Vesaratchavest M."/>
            <person name="Whitehead S."/>
            <person name="Yeats C."/>
            <person name="Barrell B.G."/>
            <person name="Oyston P.C.F."/>
            <person name="Parkhill J."/>
        </authorList>
    </citation>
    <scope>NUCLEOTIDE SEQUENCE [LARGE SCALE GENOMIC DNA]</scope>
    <source>
        <strain>K96243</strain>
    </source>
</reference>
<gene>
    <name evidence="1" type="primary">purA</name>
    <name type="ordered locus">BPSL1524</name>
</gene>
<name>PURA_BURPS</name>
<evidence type="ECO:0000255" key="1">
    <source>
        <dbReference type="HAMAP-Rule" id="MF_00011"/>
    </source>
</evidence>
<proteinExistence type="inferred from homology"/>
<dbReference type="EC" id="6.3.4.4" evidence="1"/>
<dbReference type="EMBL" id="BX571965">
    <property type="protein sequence ID" value="CAH35525.1"/>
    <property type="molecule type" value="Genomic_DNA"/>
</dbReference>
<dbReference type="RefSeq" id="WP_004534924.1">
    <property type="nucleotide sequence ID" value="NZ_CP009538.1"/>
</dbReference>
<dbReference type="RefSeq" id="YP_108144.1">
    <property type="nucleotide sequence ID" value="NC_006350.1"/>
</dbReference>
<dbReference type="SMR" id="Q63US2"/>
<dbReference type="STRING" id="272560.BPSL1524"/>
<dbReference type="KEGG" id="bps:BPSL1524"/>
<dbReference type="PATRIC" id="fig|272560.51.peg.3562"/>
<dbReference type="eggNOG" id="COG0104">
    <property type="taxonomic scope" value="Bacteria"/>
</dbReference>
<dbReference type="UniPathway" id="UPA00075">
    <property type="reaction ID" value="UER00335"/>
</dbReference>
<dbReference type="Proteomes" id="UP000000605">
    <property type="component" value="Chromosome 1"/>
</dbReference>
<dbReference type="GO" id="GO:0005737">
    <property type="term" value="C:cytoplasm"/>
    <property type="evidence" value="ECO:0007669"/>
    <property type="project" value="UniProtKB-SubCell"/>
</dbReference>
<dbReference type="GO" id="GO:0004019">
    <property type="term" value="F:adenylosuccinate synthase activity"/>
    <property type="evidence" value="ECO:0007669"/>
    <property type="project" value="UniProtKB-UniRule"/>
</dbReference>
<dbReference type="GO" id="GO:0005525">
    <property type="term" value="F:GTP binding"/>
    <property type="evidence" value="ECO:0007669"/>
    <property type="project" value="UniProtKB-UniRule"/>
</dbReference>
<dbReference type="GO" id="GO:0000287">
    <property type="term" value="F:magnesium ion binding"/>
    <property type="evidence" value="ECO:0007669"/>
    <property type="project" value="UniProtKB-UniRule"/>
</dbReference>
<dbReference type="GO" id="GO:0044208">
    <property type="term" value="P:'de novo' AMP biosynthetic process"/>
    <property type="evidence" value="ECO:0007669"/>
    <property type="project" value="UniProtKB-UniRule"/>
</dbReference>
<dbReference type="GO" id="GO:0046040">
    <property type="term" value="P:IMP metabolic process"/>
    <property type="evidence" value="ECO:0007669"/>
    <property type="project" value="TreeGrafter"/>
</dbReference>
<dbReference type="CDD" id="cd03108">
    <property type="entry name" value="AdSS"/>
    <property type="match status" value="1"/>
</dbReference>
<dbReference type="FunFam" id="1.10.300.10:FF:000001">
    <property type="entry name" value="Adenylosuccinate synthetase"/>
    <property type="match status" value="1"/>
</dbReference>
<dbReference type="FunFam" id="3.90.170.10:FF:000001">
    <property type="entry name" value="Adenylosuccinate synthetase"/>
    <property type="match status" value="1"/>
</dbReference>
<dbReference type="Gene3D" id="3.40.440.10">
    <property type="entry name" value="Adenylosuccinate Synthetase, subunit A, domain 1"/>
    <property type="match status" value="1"/>
</dbReference>
<dbReference type="Gene3D" id="1.10.300.10">
    <property type="entry name" value="Adenylosuccinate Synthetase, subunit A, domain 2"/>
    <property type="match status" value="1"/>
</dbReference>
<dbReference type="Gene3D" id="3.90.170.10">
    <property type="entry name" value="Adenylosuccinate Synthetase, subunit A, domain 3"/>
    <property type="match status" value="1"/>
</dbReference>
<dbReference type="HAMAP" id="MF_00011">
    <property type="entry name" value="Adenylosucc_synth"/>
    <property type="match status" value="1"/>
</dbReference>
<dbReference type="InterPro" id="IPR018220">
    <property type="entry name" value="Adenylosuccin_syn_GTP-bd"/>
</dbReference>
<dbReference type="InterPro" id="IPR033128">
    <property type="entry name" value="Adenylosuccin_syn_Lys_AS"/>
</dbReference>
<dbReference type="InterPro" id="IPR042109">
    <property type="entry name" value="Adenylosuccinate_synth_dom1"/>
</dbReference>
<dbReference type="InterPro" id="IPR042110">
    <property type="entry name" value="Adenylosuccinate_synth_dom2"/>
</dbReference>
<dbReference type="InterPro" id="IPR042111">
    <property type="entry name" value="Adenylosuccinate_synth_dom3"/>
</dbReference>
<dbReference type="InterPro" id="IPR001114">
    <property type="entry name" value="Adenylosuccinate_synthetase"/>
</dbReference>
<dbReference type="InterPro" id="IPR027417">
    <property type="entry name" value="P-loop_NTPase"/>
</dbReference>
<dbReference type="NCBIfam" id="NF002223">
    <property type="entry name" value="PRK01117.1"/>
    <property type="match status" value="1"/>
</dbReference>
<dbReference type="NCBIfam" id="TIGR00184">
    <property type="entry name" value="purA"/>
    <property type="match status" value="1"/>
</dbReference>
<dbReference type="PANTHER" id="PTHR11846">
    <property type="entry name" value="ADENYLOSUCCINATE SYNTHETASE"/>
    <property type="match status" value="1"/>
</dbReference>
<dbReference type="PANTHER" id="PTHR11846:SF0">
    <property type="entry name" value="ADENYLOSUCCINATE SYNTHETASE"/>
    <property type="match status" value="1"/>
</dbReference>
<dbReference type="Pfam" id="PF00709">
    <property type="entry name" value="Adenylsucc_synt"/>
    <property type="match status" value="1"/>
</dbReference>
<dbReference type="SMART" id="SM00788">
    <property type="entry name" value="Adenylsucc_synt"/>
    <property type="match status" value="1"/>
</dbReference>
<dbReference type="SUPFAM" id="SSF52540">
    <property type="entry name" value="P-loop containing nucleoside triphosphate hydrolases"/>
    <property type="match status" value="1"/>
</dbReference>
<dbReference type="PROSITE" id="PS01266">
    <property type="entry name" value="ADENYLOSUCCIN_SYN_1"/>
    <property type="match status" value="1"/>
</dbReference>
<dbReference type="PROSITE" id="PS00513">
    <property type="entry name" value="ADENYLOSUCCIN_SYN_2"/>
    <property type="match status" value="1"/>
</dbReference>
<protein>
    <recommendedName>
        <fullName evidence="1">Adenylosuccinate synthetase</fullName>
        <shortName evidence="1">AMPSase</shortName>
        <shortName evidence="1">AdSS</shortName>
        <ecNumber evidence="1">6.3.4.4</ecNumber>
    </recommendedName>
    <alternativeName>
        <fullName evidence="1">IMP--aspartate ligase</fullName>
    </alternativeName>
</protein>
<sequence length="448" mass="48331">MSASAVNVTPGRNVVVVGTQWGDEGKGKIVDWLTDHAQGVVRFQGGHNAGHTLIIGGKKTILRLIPSGIMREGVACYIGNGVVLSPEALFKEIGELEEAGLSVRERLFISEATTLILPYHVAIDQAREARRGAGKIGTTGRGIGPAYEDKVGRRALRVQDLFDARTFADRLRENLDFHNFVLTQYLGGAAVDFQATLDTMLGYADRLKPMVTDVSRRLYEENHAGRNLLFEGAQGTLLDIDHGTYPFVTSSNCVAGAAAAGAGVGPQKLDYILGITKAYCTRVGSGPFPSELYDADNPSRQDQIGITLANVGKEFGSVTGRPRRTGWLDAAALRRSIQINGVSGLCMTKLDVLDGLDEVKLCVGYKIDGEDVDLLPRGAAEVARCEPVYETFGGWKESTVGIDSWDALPANARAYLTRVQEVAGVPIDMVSTGPDRDETILLRHPFKV</sequence>